<sequence length="70" mass="8167">MWFEILPGLAVMGVCLVIPGVATAYIHKYTNGGKEKRVGRLRYQWYLMERDRRVSGVNRYYVSRGLENID</sequence>
<comment type="function">
    <text evidence="1">Accessory subunit of the mitochondrial membrane respiratory chain NADH dehydrogenase (Complex I), that is believed not to be involved in catalysis. Complex I functions in the transfer of electrons from NADH to the respiratory chain. The immediate electron acceptor for the enzyme is believed to be ubiquinone.</text>
</comment>
<comment type="subunit">
    <text evidence="1">Complex I is composed of 45 different subunits.</text>
</comment>
<comment type="subcellular location">
    <subcellularLocation>
        <location evidence="1">Mitochondrion inner membrane</location>
        <topology evidence="2">Single-pass membrane protein</topology>
        <orientation evidence="1">Matrix side</orientation>
    </subcellularLocation>
</comment>
<comment type="similarity">
    <text evidence="3">Belongs to the complex I NDUFA1 subunit family.</text>
</comment>
<reference key="1">
    <citation type="journal article" date="1999" name="Proc. Natl. Acad. Sci. U.S.A.">
        <title>The NDUFA1 gene product (MWFE protein) is essential for activity of complex I in mammalian mitochondria.</title>
        <authorList>
            <person name="Au H.C."/>
            <person name="Seo B.B."/>
            <person name="Matsuno-Yagi A."/>
            <person name="Yagi T."/>
            <person name="Scheffler I.E."/>
        </authorList>
    </citation>
    <scope>NUCLEOTIDE SEQUENCE [MRNA]</scope>
</reference>
<accession>Q9WU08</accession>
<evidence type="ECO:0000250" key="1">
    <source>
        <dbReference type="UniProtKB" id="O15239"/>
    </source>
</evidence>
<evidence type="ECO:0000255" key="2"/>
<evidence type="ECO:0000305" key="3"/>
<dbReference type="EMBL" id="AF100706">
    <property type="protein sequence ID" value="AAD25330.1"/>
    <property type="molecule type" value="mRNA"/>
</dbReference>
<dbReference type="RefSeq" id="NP_001233690.1">
    <property type="nucleotide sequence ID" value="NM_001246761.1"/>
</dbReference>
<dbReference type="SMR" id="Q9WU08"/>
<dbReference type="iPTMnet" id="Q9WU08"/>
<dbReference type="PaxDb" id="10029-NP_001233690.1"/>
<dbReference type="Ensembl" id="ENSCGRT00001005588.1">
    <property type="protein sequence ID" value="ENSCGRP00001003809.1"/>
    <property type="gene ID" value="ENSCGRG00001004710.1"/>
</dbReference>
<dbReference type="GeneID" id="100689328"/>
<dbReference type="KEGG" id="cge:100689328"/>
<dbReference type="CTD" id="4694"/>
<dbReference type="eggNOG" id="ENOG502S3S5">
    <property type="taxonomic scope" value="Eukaryota"/>
</dbReference>
<dbReference type="GeneTree" id="ENSGT00390000007560"/>
<dbReference type="OrthoDB" id="1920692at2759"/>
<dbReference type="Proteomes" id="UP000694386">
    <property type="component" value="Unplaced"/>
</dbReference>
<dbReference type="Proteomes" id="UP001108280">
    <property type="component" value="Chromosome X"/>
</dbReference>
<dbReference type="GO" id="GO:0005743">
    <property type="term" value="C:mitochondrial inner membrane"/>
    <property type="evidence" value="ECO:0007669"/>
    <property type="project" value="UniProtKB-SubCell"/>
</dbReference>
<dbReference type="GO" id="GO:0045271">
    <property type="term" value="C:respiratory chain complex I"/>
    <property type="evidence" value="ECO:0000250"/>
    <property type="project" value="UniProtKB"/>
</dbReference>
<dbReference type="InterPro" id="IPR017384">
    <property type="entry name" value="NADH_Ub_cplx-1_asu_su-1"/>
</dbReference>
<dbReference type="PANTHER" id="PTHR17098:SF2">
    <property type="entry name" value="NADH DEHYDROGENASE [UBIQUINONE] 1 ALPHA SUBCOMPLEX SUBUNIT 1"/>
    <property type="match status" value="1"/>
</dbReference>
<dbReference type="PANTHER" id="PTHR17098">
    <property type="entry name" value="NADH-UBIQUINONE OXIDOREDUCTASE MWFE SUBUNIT"/>
    <property type="match status" value="1"/>
</dbReference>
<dbReference type="Pfam" id="PF15879">
    <property type="entry name" value="MWFE"/>
    <property type="match status" value="1"/>
</dbReference>
<dbReference type="PIRSF" id="PIRSF038095">
    <property type="entry name" value="NDUA1"/>
    <property type="match status" value="1"/>
</dbReference>
<keyword id="KW-0249">Electron transport</keyword>
<keyword id="KW-0472">Membrane</keyword>
<keyword id="KW-0496">Mitochondrion</keyword>
<keyword id="KW-0999">Mitochondrion inner membrane</keyword>
<keyword id="KW-0679">Respiratory chain</keyword>
<keyword id="KW-0812">Transmembrane</keyword>
<keyword id="KW-1133">Transmembrane helix</keyword>
<keyword id="KW-0813">Transport</keyword>
<protein>
    <recommendedName>
        <fullName>NADH dehydrogenase [ubiquinone] 1 alpha subcomplex subunit 1</fullName>
    </recommendedName>
    <alternativeName>
        <fullName>Complex I-MWFE</fullName>
        <shortName>CI-MWFE</shortName>
    </alternativeName>
    <alternativeName>
        <fullName>NADH-ubiquinone oxidoreductase MWFE subunit</fullName>
    </alternativeName>
</protein>
<feature type="chain" id="PRO_0000118815" description="NADH dehydrogenase [ubiquinone] 1 alpha subcomplex subunit 1">
    <location>
        <begin position="1"/>
        <end position="70"/>
    </location>
</feature>
<feature type="transmembrane region" description="Helical" evidence="2">
    <location>
        <begin position="1"/>
        <end position="21"/>
    </location>
</feature>
<organism>
    <name type="scientific">Cricetulus griseus</name>
    <name type="common">Chinese hamster</name>
    <name type="synonym">Cricetulus barabensis griseus</name>
    <dbReference type="NCBI Taxonomy" id="10029"/>
    <lineage>
        <taxon>Eukaryota</taxon>
        <taxon>Metazoa</taxon>
        <taxon>Chordata</taxon>
        <taxon>Craniata</taxon>
        <taxon>Vertebrata</taxon>
        <taxon>Euteleostomi</taxon>
        <taxon>Mammalia</taxon>
        <taxon>Eutheria</taxon>
        <taxon>Euarchontoglires</taxon>
        <taxon>Glires</taxon>
        <taxon>Rodentia</taxon>
        <taxon>Myomorpha</taxon>
        <taxon>Muroidea</taxon>
        <taxon>Cricetidae</taxon>
        <taxon>Cricetinae</taxon>
        <taxon>Cricetulus</taxon>
    </lineage>
</organism>
<gene>
    <name type="primary">NDUFA1</name>
</gene>
<proteinExistence type="inferred from homology"/>
<name>NDUA1_CRIGR</name>